<gene>
    <name type="primary">rarD</name>
</gene>
<accession>P83936</accession>
<organism>
    <name type="scientific">Streptomyces exfoliatus</name>
    <name type="common">Streptomyces hydrogenans</name>
    <dbReference type="NCBI Taxonomy" id="1905"/>
    <lineage>
        <taxon>Bacteria</taxon>
        <taxon>Bacillati</taxon>
        <taxon>Actinomycetota</taxon>
        <taxon>Actinomycetes</taxon>
        <taxon>Kitasatosporales</taxon>
        <taxon>Streptomycetaceae</taxon>
        <taxon>Streptomyces</taxon>
    </lineage>
</organism>
<reference key="1">
    <citation type="submission" date="2003-07" db="EMBL/GenBank/DDBJ databases">
        <title>The role of metalloproteases (leupeptin-inactivating enzymes) in morphological differentiation of Streptomyces exfoliatus SMF13.</title>
        <authorList>
            <person name="Lee D.H."/>
            <person name="Lee K.J."/>
        </authorList>
    </citation>
    <scope>NUCLEOTIDE SEQUENCE [GENOMIC DNA]</scope>
    <source>
        <strain>SMF13</strain>
    </source>
</reference>
<feature type="chain" id="PRO_0000108156" description="Protein RarD">
    <location>
        <begin position="1"/>
        <end position="315"/>
    </location>
</feature>
<feature type="transmembrane region" description="Helical" evidence="1">
    <location>
        <begin position="11"/>
        <end position="31"/>
    </location>
</feature>
<feature type="transmembrane region" description="Helical" evidence="1">
    <location>
        <begin position="37"/>
        <end position="57"/>
    </location>
</feature>
<feature type="transmembrane region" description="Helical" evidence="1">
    <location>
        <begin position="75"/>
        <end position="95"/>
    </location>
</feature>
<feature type="transmembrane region" description="Helical" evidence="1">
    <location>
        <begin position="103"/>
        <end position="123"/>
    </location>
</feature>
<feature type="transmembrane region" description="Helical" evidence="1">
    <location>
        <begin position="129"/>
        <end position="149"/>
    </location>
</feature>
<feature type="transmembrane region" description="Helical" evidence="1">
    <location>
        <begin position="180"/>
        <end position="200"/>
    </location>
</feature>
<feature type="transmembrane region" description="Helical" evidence="1">
    <location>
        <begin position="216"/>
        <end position="236"/>
    </location>
</feature>
<feature type="transmembrane region" description="Helical" evidence="1">
    <location>
        <begin position="242"/>
        <end position="262"/>
    </location>
</feature>
<feature type="transmembrane region" description="Helical" evidence="1">
    <location>
        <begin position="271"/>
        <end position="291"/>
    </location>
</feature>
<feature type="domain" description="EamA">
    <location>
        <begin position="19"/>
        <end position="146"/>
    </location>
</feature>
<name>RARD_STREX</name>
<protein>
    <recommendedName>
        <fullName>Protein RarD</fullName>
    </recommendedName>
</protein>
<proteinExistence type="inferred from homology"/>
<comment type="subcellular location">
    <subcellularLocation>
        <location evidence="2">Cell membrane</location>
        <topology evidence="2">Multi-pass membrane protein</topology>
    </subcellularLocation>
</comment>
<comment type="similarity">
    <text evidence="2">Belongs to the EamA transporter family.</text>
</comment>
<evidence type="ECO:0000255" key="1"/>
<evidence type="ECO:0000305" key="2"/>
<dbReference type="EMBL" id="AY335438">
    <property type="protein sequence ID" value="AAQ73536.1"/>
    <property type="molecule type" value="Genomic_DNA"/>
</dbReference>
<dbReference type="SMR" id="P83936"/>
<dbReference type="GO" id="GO:0005886">
    <property type="term" value="C:plasma membrane"/>
    <property type="evidence" value="ECO:0007669"/>
    <property type="project" value="UniProtKB-SubCell"/>
</dbReference>
<dbReference type="InterPro" id="IPR000620">
    <property type="entry name" value="EamA_dom"/>
</dbReference>
<dbReference type="InterPro" id="IPR004626">
    <property type="entry name" value="RarD"/>
</dbReference>
<dbReference type="NCBIfam" id="TIGR00688">
    <property type="entry name" value="rarD"/>
    <property type="match status" value="1"/>
</dbReference>
<dbReference type="PANTHER" id="PTHR22911">
    <property type="entry name" value="ACYL-MALONYL CONDENSING ENZYME-RELATED"/>
    <property type="match status" value="1"/>
</dbReference>
<dbReference type="PANTHER" id="PTHR22911:SF137">
    <property type="entry name" value="SOLUTE CARRIER FAMILY 35 MEMBER G2-RELATED"/>
    <property type="match status" value="1"/>
</dbReference>
<dbReference type="Pfam" id="PF00892">
    <property type="entry name" value="EamA"/>
    <property type="match status" value="1"/>
</dbReference>
<dbReference type="SUPFAM" id="SSF103481">
    <property type="entry name" value="Multidrug resistance efflux transporter EmrE"/>
    <property type="match status" value="2"/>
</dbReference>
<sequence length="315" mass="34209">MKAENEQRTGLLYGFGAYGMWGLVPLFWPLLKPSGAVEILAHRMVWSLAVVGLALLALRRWGWIRELLRNPRKLGLTALAASVISVNWGLYIWSVNNEHVVEASLGYFINPLVSIAIGVLVLGERLRRAQWVAVGLSFVAVLVLAIGYGRPPWISLVLAFSFATYGLIKKKLNMGGLESLAAETAVLFLPALGYVLWLGAQGQSTFAAHGVGHALLLAATGLVTAIPLVFFGMAAIRVPLSTLGLLQYMAPVFQFGLGVLYFHEAMPPERWAGFSLVWAALVILTWDALRTARRSRARLEAAAPTVLATPAREPA</sequence>
<keyword id="KW-1003">Cell membrane</keyword>
<keyword id="KW-0472">Membrane</keyword>
<keyword id="KW-0812">Transmembrane</keyword>
<keyword id="KW-1133">Transmembrane helix</keyword>
<keyword id="KW-0813">Transport</keyword>